<name>CHLB_NOSP7</name>
<dbReference type="EC" id="1.3.7.7" evidence="1"/>
<dbReference type="EMBL" id="CP001037">
    <property type="protein sequence ID" value="ACC83277.1"/>
    <property type="molecule type" value="Genomic_DNA"/>
</dbReference>
<dbReference type="RefSeq" id="WP_012411233.1">
    <property type="nucleotide sequence ID" value="NC_010628.1"/>
</dbReference>
<dbReference type="SMR" id="B2J0C5"/>
<dbReference type="STRING" id="63737.Npun_R4932"/>
<dbReference type="EnsemblBacteria" id="ACC83277">
    <property type="protein sequence ID" value="ACC83277"/>
    <property type="gene ID" value="Npun_R4932"/>
</dbReference>
<dbReference type="KEGG" id="npu:Npun_R4932"/>
<dbReference type="eggNOG" id="COG2710">
    <property type="taxonomic scope" value="Bacteria"/>
</dbReference>
<dbReference type="HOGENOM" id="CLU_025470_0_0_3"/>
<dbReference type="OrthoDB" id="5717231at2"/>
<dbReference type="PhylomeDB" id="B2J0C5"/>
<dbReference type="UniPathway" id="UPA00670"/>
<dbReference type="Proteomes" id="UP000001191">
    <property type="component" value="Chromosome"/>
</dbReference>
<dbReference type="GO" id="GO:0051539">
    <property type="term" value="F:4 iron, 4 sulfur cluster binding"/>
    <property type="evidence" value="ECO:0007669"/>
    <property type="project" value="UniProtKB-UniRule"/>
</dbReference>
<dbReference type="GO" id="GO:0005524">
    <property type="term" value="F:ATP binding"/>
    <property type="evidence" value="ECO:0007669"/>
    <property type="project" value="UniProtKB-UniRule"/>
</dbReference>
<dbReference type="GO" id="GO:0046872">
    <property type="term" value="F:metal ion binding"/>
    <property type="evidence" value="ECO:0007669"/>
    <property type="project" value="UniProtKB-KW"/>
</dbReference>
<dbReference type="GO" id="GO:0016730">
    <property type="term" value="F:oxidoreductase activity, acting on iron-sulfur proteins as donors"/>
    <property type="evidence" value="ECO:0007669"/>
    <property type="project" value="InterPro"/>
</dbReference>
<dbReference type="GO" id="GO:0016636">
    <property type="term" value="F:oxidoreductase activity, acting on the CH-CH group of donors, iron-sulfur protein as acceptor"/>
    <property type="evidence" value="ECO:0007669"/>
    <property type="project" value="UniProtKB-UniRule"/>
</dbReference>
<dbReference type="GO" id="GO:0036068">
    <property type="term" value="P:light-independent chlorophyll biosynthetic process"/>
    <property type="evidence" value="ECO:0007669"/>
    <property type="project" value="UniProtKB-UniRule"/>
</dbReference>
<dbReference type="GO" id="GO:0019685">
    <property type="term" value="P:photosynthesis, dark reaction"/>
    <property type="evidence" value="ECO:0007669"/>
    <property type="project" value="InterPro"/>
</dbReference>
<dbReference type="CDD" id="cd01981">
    <property type="entry name" value="Pchlide_reductase_B"/>
    <property type="match status" value="1"/>
</dbReference>
<dbReference type="Gene3D" id="1.20.89.20">
    <property type="match status" value="1"/>
</dbReference>
<dbReference type="Gene3D" id="3.40.50.1980">
    <property type="entry name" value="Nitrogenase molybdenum iron protein domain"/>
    <property type="match status" value="3"/>
</dbReference>
<dbReference type="Gene3D" id="1.10.8.550">
    <property type="entry name" value="Proto-chlorophyllide reductase 57 kD subunit B"/>
    <property type="match status" value="1"/>
</dbReference>
<dbReference type="HAMAP" id="MF_00353">
    <property type="entry name" value="ChlB_BchB"/>
    <property type="match status" value="1"/>
</dbReference>
<dbReference type="InterPro" id="IPR050152">
    <property type="entry name" value="ChlB/BchB/BchZ"/>
</dbReference>
<dbReference type="InterPro" id="IPR013580">
    <property type="entry name" value="LI-POR_suB-like_C"/>
</dbReference>
<dbReference type="InterPro" id="IPR000510">
    <property type="entry name" value="Nase/OxRdtase_comp1"/>
</dbReference>
<dbReference type="InterPro" id="IPR042298">
    <property type="entry name" value="P-CP_red_C"/>
</dbReference>
<dbReference type="InterPro" id="IPR005969">
    <property type="entry name" value="Protochl_reductB"/>
</dbReference>
<dbReference type="InterPro" id="IPR016209">
    <property type="entry name" value="Protochlorophyllide_Rdtase"/>
</dbReference>
<dbReference type="NCBIfam" id="TIGR01278">
    <property type="entry name" value="DPOR_BchB"/>
    <property type="match status" value="1"/>
</dbReference>
<dbReference type="PANTHER" id="PTHR33712">
    <property type="entry name" value="LIGHT-INDEPENDENT PROTOCHLOROPHYLLIDE REDUCTASE SUBUNIT B"/>
    <property type="match status" value="1"/>
</dbReference>
<dbReference type="PANTHER" id="PTHR33712:SF7">
    <property type="entry name" value="LIGHT-INDEPENDENT PROTOCHLOROPHYLLIDE REDUCTASE SUBUNIT B"/>
    <property type="match status" value="1"/>
</dbReference>
<dbReference type="Pfam" id="PF00148">
    <property type="entry name" value="Oxidored_nitro"/>
    <property type="match status" value="1"/>
</dbReference>
<dbReference type="Pfam" id="PF08369">
    <property type="entry name" value="PCP_red"/>
    <property type="match status" value="1"/>
</dbReference>
<dbReference type="PIRSF" id="PIRSF000163">
    <property type="entry name" value="PCP_ChlB"/>
    <property type="match status" value="1"/>
</dbReference>
<dbReference type="SUPFAM" id="SSF53807">
    <property type="entry name" value="Helical backbone' metal receptor"/>
    <property type="match status" value="1"/>
</dbReference>
<protein>
    <recommendedName>
        <fullName evidence="1">Light-independent protochlorophyllide reductase subunit B</fullName>
        <shortName evidence="1">DPOR subunit B</shortName>
        <shortName evidence="1">LI-POR subunit B</shortName>
        <ecNumber evidence="1">1.3.7.7</ecNumber>
    </recommendedName>
</protein>
<feature type="chain" id="PRO_1000120531" description="Light-independent protochlorophyllide reductase subunit B">
    <location>
        <begin position="1"/>
        <end position="508"/>
    </location>
</feature>
<feature type="active site" description="Proton donor" evidence="1">
    <location>
        <position position="294"/>
    </location>
</feature>
<feature type="binding site" evidence="1">
    <location>
        <position position="36"/>
    </location>
    <ligand>
        <name>[4Fe-4S] cluster</name>
        <dbReference type="ChEBI" id="CHEBI:49883"/>
        <note>ligand shared with heterodimeric partner</note>
    </ligand>
</feature>
<feature type="binding site" evidence="1">
    <location>
        <begin position="429"/>
        <end position="430"/>
    </location>
    <ligand>
        <name>substrate</name>
    </ligand>
</feature>
<organism>
    <name type="scientific">Nostoc punctiforme (strain ATCC 29133 / PCC 73102)</name>
    <dbReference type="NCBI Taxonomy" id="63737"/>
    <lineage>
        <taxon>Bacteria</taxon>
        <taxon>Bacillati</taxon>
        <taxon>Cyanobacteriota</taxon>
        <taxon>Cyanophyceae</taxon>
        <taxon>Nostocales</taxon>
        <taxon>Nostocaceae</taxon>
        <taxon>Nostoc</taxon>
    </lineage>
</organism>
<reference key="1">
    <citation type="journal article" date="2013" name="Plant Physiol.">
        <title>A Nostoc punctiforme Sugar Transporter Necessary to Establish a Cyanobacterium-Plant Symbiosis.</title>
        <authorList>
            <person name="Ekman M."/>
            <person name="Picossi S."/>
            <person name="Campbell E.L."/>
            <person name="Meeks J.C."/>
            <person name="Flores E."/>
        </authorList>
    </citation>
    <scope>NUCLEOTIDE SEQUENCE [LARGE SCALE GENOMIC DNA]</scope>
    <source>
        <strain>ATCC 29133 / PCC 73102</strain>
    </source>
</reference>
<evidence type="ECO:0000255" key="1">
    <source>
        <dbReference type="HAMAP-Rule" id="MF_00353"/>
    </source>
</evidence>
<proteinExistence type="inferred from homology"/>
<comment type="function">
    <text evidence="1">Component of the dark-operative protochlorophyllide reductase (DPOR) that uses Mg-ATP and reduced ferredoxin to reduce ring D of protochlorophyllide (Pchlide) to form chlorophyllide a (Chlide). This reaction is light-independent. The NB-protein (ChlN-ChlB) is the catalytic component of the complex.</text>
</comment>
<comment type="catalytic activity">
    <reaction evidence="1">
        <text>chlorophyllide a + oxidized 2[4Fe-4S]-[ferredoxin] + 2 ADP + 2 phosphate = protochlorophyllide a + reduced 2[4Fe-4S]-[ferredoxin] + 2 ATP + 2 H2O</text>
        <dbReference type="Rhea" id="RHEA:28202"/>
        <dbReference type="Rhea" id="RHEA-COMP:10002"/>
        <dbReference type="Rhea" id="RHEA-COMP:10004"/>
        <dbReference type="ChEBI" id="CHEBI:15377"/>
        <dbReference type="ChEBI" id="CHEBI:30616"/>
        <dbReference type="ChEBI" id="CHEBI:33722"/>
        <dbReference type="ChEBI" id="CHEBI:33723"/>
        <dbReference type="ChEBI" id="CHEBI:43474"/>
        <dbReference type="ChEBI" id="CHEBI:83348"/>
        <dbReference type="ChEBI" id="CHEBI:83350"/>
        <dbReference type="ChEBI" id="CHEBI:456216"/>
        <dbReference type="EC" id="1.3.7.7"/>
    </reaction>
</comment>
<comment type="cofactor">
    <cofactor evidence="1">
        <name>[4Fe-4S] cluster</name>
        <dbReference type="ChEBI" id="CHEBI:49883"/>
    </cofactor>
    <text evidence="1">Binds 1 [4Fe-4S] cluster per heterodimer. The cluster is bound at the heterodimer interface by residues from both subunits.</text>
</comment>
<comment type="pathway">
    <text evidence="1">Porphyrin-containing compound metabolism; chlorophyll biosynthesis (light-independent).</text>
</comment>
<comment type="subunit">
    <text evidence="1">Protochlorophyllide reductase is composed of three subunits; ChlL, ChlN and ChlB. Forms a heterotetramer of two ChlB and two ChlN subunits.</text>
</comment>
<comment type="similarity">
    <text evidence="1">Belongs to the ChlB/BchB/BchZ family.</text>
</comment>
<keyword id="KW-0004">4Fe-4S</keyword>
<keyword id="KW-0067">ATP-binding</keyword>
<keyword id="KW-0149">Chlorophyll biosynthesis</keyword>
<keyword id="KW-0408">Iron</keyword>
<keyword id="KW-0411">Iron-sulfur</keyword>
<keyword id="KW-0479">Metal-binding</keyword>
<keyword id="KW-0547">Nucleotide-binding</keyword>
<keyword id="KW-0560">Oxidoreductase</keyword>
<keyword id="KW-0602">Photosynthesis</keyword>
<keyword id="KW-1185">Reference proteome</keyword>
<accession>B2J0C5</accession>
<sequence length="508" mass="56953">MKLAYWMYAGPAHIGTLRIASSFKNVHAIMHAPIGDDYFNVMRSMLSRERDFTPVTTSVVDRNVLARGSQEKVVDNIVRKDAEEHPDLIVLTPTCTSSILQEDLHNFVERAQLEAKGDVMLADVNHYRYNELQAADRTLDQIVQYYIEKARKRGELAEGKTAKPSVNIIGTTTLGFHNNHDCTELKRLMADLGIKVNTLIPEGASVNDLKKMSQAWFNLVPYRELGLTTARYLEEQFGTPYIDITPMGVVETARCIRKIQQVINAQGAEVDYENFINEQTLHVSQAAWFSRSIDCQNLTGKKAVVFGDNTHAAAITKILAREMGIHVVWAGTYCKYDAGWFREQVSEYCDEVLISEDHGEIGDAIARVEPSAIFGTQMERHVGKRLDIPCGVIAAPIHVQNFPIGYKPFMGYEGTNQITDLIYNSFTLGMEDHLLEIFGGHDTKEVITRGISADSDLNWTKDGQAELNKIPGFVRGKVKRNTEKFARDRGFKEINAEVLYAAKEAVGA</sequence>
<gene>
    <name evidence="1" type="primary">chlB</name>
    <name type="ordered locus">Npun_R4932</name>
</gene>